<dbReference type="EMBL" id="U40829">
    <property type="status" value="NOT_ANNOTATED_CDS"/>
    <property type="molecule type" value="Genomic_DNA"/>
</dbReference>
<dbReference type="EMBL" id="BK006949">
    <property type="protein sequence ID" value="DAA11551.1"/>
    <property type="molecule type" value="Genomic_DNA"/>
</dbReference>
<dbReference type="PIR" id="S40909">
    <property type="entry name" value="S40909"/>
</dbReference>
<dbReference type="RefSeq" id="NP_009407.1">
    <molecule id="P0CX58-1"/>
    <property type="nucleotide sequence ID" value="NM_001178214.1"/>
</dbReference>
<dbReference type="RefSeq" id="NP_058192.1">
    <molecule id="P0CX58-1"/>
    <property type="nucleotide sequence ID" value="NM_001184393.1"/>
</dbReference>
<dbReference type="SMR" id="P0CX58"/>
<dbReference type="BioGRID" id="31796">
    <property type="interactions" value="24"/>
</dbReference>
<dbReference type="BioGRID" id="36305">
    <property type="interactions" value="20"/>
</dbReference>
<dbReference type="FunCoup" id="P0CX58">
    <property type="interactions" value="42"/>
</dbReference>
<dbReference type="IntAct" id="P0CX58">
    <property type="interactions" value="1"/>
</dbReference>
<dbReference type="MINT" id="P0CX58"/>
<dbReference type="GlyGen" id="P0CX58">
    <property type="glycosylation" value="2 sites"/>
</dbReference>
<dbReference type="iPTMnet" id="P0CX58"/>
<dbReference type="GeneID" id="856258"/>
<dbReference type="KEGG" id="sce:YAR010C"/>
<dbReference type="KEGG" id="sce:YPR137C-A"/>
<dbReference type="AGR" id="SGD:S000007359"/>
<dbReference type="SGD" id="S000007359">
    <property type="gene designation" value="YPR137C-A"/>
</dbReference>
<dbReference type="VEuPathDB" id="FungiDB:YAR010C"/>
<dbReference type="VEuPathDB" id="FungiDB:YPR137C-A"/>
<dbReference type="HOGENOM" id="CLU_045291_1_0_1"/>
<dbReference type="InParanoid" id="P0CX58"/>
<dbReference type="OrthoDB" id="5423336at2759"/>
<dbReference type="Proteomes" id="UP000002311">
    <property type="component" value="Chromosome XVI"/>
</dbReference>
<dbReference type="RNAct" id="P0CX58">
    <property type="molecule type" value="protein"/>
</dbReference>
<dbReference type="GO" id="GO:0005737">
    <property type="term" value="C:cytoplasm"/>
    <property type="evidence" value="ECO:0007669"/>
    <property type="project" value="UniProtKB-SubCell"/>
</dbReference>
<dbReference type="GO" id="GO:0003723">
    <property type="term" value="F:RNA binding"/>
    <property type="evidence" value="ECO:0007669"/>
    <property type="project" value="UniProtKB-KW"/>
</dbReference>
<dbReference type="GO" id="GO:0075523">
    <property type="term" value="P:viral translational frameshifting"/>
    <property type="evidence" value="ECO:0007669"/>
    <property type="project" value="UniProtKB-KW"/>
</dbReference>
<dbReference type="InterPro" id="IPR015820">
    <property type="entry name" value="TYA"/>
</dbReference>
<dbReference type="Pfam" id="PF01021">
    <property type="entry name" value="TYA"/>
    <property type="match status" value="1"/>
</dbReference>
<accession>P0CX58</accession>
<accession>D6VPM2</accession>
<accession>O13528</accession>
<protein>
    <recommendedName>
        <fullName>Transposon Ty1-PR1 Gag polyprotein</fullName>
    </recommendedName>
    <alternativeName>
        <fullName>Gag-p49</fullName>
    </alternativeName>
    <alternativeName>
        <fullName>Transposon Ty1 protein A</fullName>
        <shortName>TY1A</shortName>
        <shortName>TYA</shortName>
    </alternativeName>
    <alternativeName>
        <fullName>p58</fullName>
    </alternativeName>
    <component>
        <recommendedName>
            <fullName>Capsid protein</fullName>
            <shortName>CA</shortName>
        </recommendedName>
        <alternativeName>
            <fullName>Gag-p45</fullName>
        </alternativeName>
        <alternativeName>
            <fullName>p54</fullName>
        </alternativeName>
    </component>
    <component>
        <recommendedName>
            <fullName>Gag-p4</fullName>
        </recommendedName>
    </component>
</protein>
<evidence type="ECO:0000250" key="1"/>
<evidence type="ECO:0000250" key="2">
    <source>
        <dbReference type="UniProtKB" id="Q12441"/>
    </source>
</evidence>
<evidence type="ECO:0000256" key="3">
    <source>
        <dbReference type="SAM" id="MobiDB-lite"/>
    </source>
</evidence>
<evidence type="ECO:0000269" key="4">
    <source>
    </source>
</evidence>
<sequence>MESQQLSQHSPISHGSACASVTSKEVHTNQDPLDVSASKTEECEKASTKANSQQTTTPASSAVPENPHHASPQTAQSHSPQNGPYPQQCMMTQNQANPSGWSFYGHPSMIPYTPYQMSPMYFPPGPQSQFPQYPSSVGTPLSTPSPESGNTFTDSSSADSDMTSTKKYVRPPPMLTSPNDFPNWVKTYIKFLQNSNLGGIIPTVNGKPVRQITDDELTFLYNTFQIFAPSQFLPTWVKDILSVDYTDIMKILSKSIEKMQSDTQEANDIVTLANLQYNGSTPADAFETKVTNIIDRLNNNGIHINNKVACQLIMRGLSGEYKFLRYTRHRHLNMTVAELFLDIHAIYEEQQGSRNSKPNYRRNPSDEKNDSRSYTNTTKPKVIARNPQKTNNSKSKTARAHNVSTSNNSPSTDNDSISKSTTEPIQLNNKHDLHLRPETY</sequence>
<organism>
    <name type="scientific">Saccharomyces cerevisiae (strain ATCC 204508 / S288c)</name>
    <name type="common">Baker's yeast</name>
    <dbReference type="NCBI Taxonomy" id="559292"/>
    <lineage>
        <taxon>Eukaryota</taxon>
        <taxon>Fungi</taxon>
        <taxon>Dikarya</taxon>
        <taxon>Ascomycota</taxon>
        <taxon>Saccharomycotina</taxon>
        <taxon>Saccharomycetes</taxon>
        <taxon>Saccharomycetales</taxon>
        <taxon>Saccharomycetaceae</taxon>
        <taxon>Saccharomyces</taxon>
    </lineage>
</organism>
<proteinExistence type="evidence at transcript level"/>
<keyword id="KW-0963">Cytoplasm</keyword>
<keyword id="KW-0597">Phosphoprotein</keyword>
<keyword id="KW-1185">Reference proteome</keyword>
<keyword id="KW-0688">Ribosomal frameshifting</keyword>
<keyword id="KW-0694">RNA-binding</keyword>
<keyword id="KW-0814">Transposable element</keyword>
<comment type="function">
    <text evidence="1">Capsid protein (CA) is the structural component of the virus-like particle (VLP), forming the shell that encapsulates the retrotransposons dimeric RNA genome. The particles are assembled from trimer-clustered units and there are holes in the capsid shells that allow for the diffusion of macromolecules. CA also has nucleocapsid-like chaperone activity, promoting primer tRNA(i)-Met annealing to the multipartite primer-binding site (PBS), dimerization of Ty1 RNA and initiation of reverse transcription (By similarity).</text>
</comment>
<comment type="subunit">
    <text evidence="1">Homotrimer.</text>
</comment>
<comment type="subcellular location">
    <subcellularLocation>
        <location evidence="1">Cytoplasm</location>
    </subcellularLocation>
</comment>
<comment type="alternative products">
    <event type="ribosomal frameshifting"/>
    <isoform>
        <id>P0CX58-1</id>
        <name>Transposon Ty1-PR1 Gag polyprotein</name>
        <sequence type="displayed"/>
    </isoform>
    <isoform>
        <id>P0C2I9-1</id>
        <name>Transposon Ty1-PR1 Gag-Pol polyprotein</name>
        <sequence type="external"/>
    </isoform>
    <text evidence="1">The Gag-Pol polyprotein is generated by a +1 ribosomal frameshift. The ratio of Gag:Gag-Pol varies between 20:1 and 5:1 (By similarity).</text>
</comment>
<comment type="induction">
    <text evidence="4">Ty1-PR1 is a highly expressed element. Induced under amino acid starvation conditions by GCN4.</text>
</comment>
<comment type="domain">
    <text evidence="1">The C-terminal RNA-binding region of CA is sufficient for all its nucleocapsid-like chaperone activities.</text>
</comment>
<comment type="miscellaneous">
    <text>Retrotransposons are mobile genetic entities that are able to replicate via an RNA intermediate and a reverse transcription step. In contrast to retroviruses, retrotransposons are non-infectious, lack an envelope and remain intracellular. Ty1 retrotransposons belong to the copia elements (pseudoviridae).</text>
</comment>
<comment type="miscellaneous">
    <molecule>Isoform Transposon Ty1-PR1 Gag polyprotein</molecule>
    <text>Produced by conventional translation.</text>
</comment>
<name>YP12A_YEAST</name>
<feature type="chain" id="PRO_0000409776" description="Transposon Ty1-PR1 Gag polyprotein">
    <location>
        <begin position="1"/>
        <end position="440"/>
    </location>
</feature>
<feature type="chain" id="PRO_0000409777" description="Capsid protein" evidence="1">
    <location>
        <begin position="1"/>
        <end position="401"/>
    </location>
</feature>
<feature type="peptide" id="PRO_0000409778" description="Gag-p4" evidence="1">
    <location>
        <begin position="402"/>
        <end position="440"/>
    </location>
</feature>
<feature type="region of interest" description="Disordered" evidence="3">
    <location>
        <begin position="1"/>
        <end position="93"/>
    </location>
</feature>
<feature type="region of interest" description="Disordered" evidence="3">
    <location>
        <begin position="126"/>
        <end position="173"/>
    </location>
</feature>
<feature type="region of interest" description="RNA-binding" evidence="1">
    <location>
        <begin position="299"/>
        <end position="401"/>
    </location>
</feature>
<feature type="region of interest" description="Disordered" evidence="3">
    <location>
        <begin position="352"/>
        <end position="440"/>
    </location>
</feature>
<feature type="compositionally biased region" description="Polar residues" evidence="3">
    <location>
        <begin position="1"/>
        <end position="23"/>
    </location>
</feature>
<feature type="compositionally biased region" description="Polar residues" evidence="3">
    <location>
        <begin position="48"/>
        <end position="60"/>
    </location>
</feature>
<feature type="compositionally biased region" description="Polar residues" evidence="3">
    <location>
        <begin position="71"/>
        <end position="93"/>
    </location>
</feature>
<feature type="compositionally biased region" description="Polar residues" evidence="3">
    <location>
        <begin position="127"/>
        <end position="152"/>
    </location>
</feature>
<feature type="compositionally biased region" description="Low complexity" evidence="3">
    <location>
        <begin position="153"/>
        <end position="165"/>
    </location>
</feature>
<feature type="compositionally biased region" description="Low complexity" evidence="3">
    <location>
        <begin position="402"/>
        <end position="418"/>
    </location>
</feature>
<feature type="compositionally biased region" description="Polar residues" evidence="3">
    <location>
        <begin position="419"/>
        <end position="428"/>
    </location>
</feature>
<feature type="compositionally biased region" description="Basic and acidic residues" evidence="3">
    <location>
        <begin position="429"/>
        <end position="440"/>
    </location>
</feature>
<feature type="site" description="Cleavage; by Ty1 protease" evidence="1">
    <location>
        <begin position="401"/>
        <end position="402"/>
    </location>
</feature>
<feature type="modified residue" description="Phosphoserine" evidence="2">
    <location>
        <position position="416"/>
    </location>
</feature>
<gene>
    <name type="primary">TY1A-PR1</name>
    <name type="synonym">YPRCTy1-2 GAG</name>
    <name type="ordered locus">YPR137C-A</name>
    <name type="ORF">P9659.6d</name>
</gene>
<reference key="1">
    <citation type="journal article" date="1997" name="Nature">
        <title>The nucleotide sequence of Saccharomyces cerevisiae chromosome XVI.</title>
        <authorList>
            <person name="Bussey H."/>
            <person name="Storms R.K."/>
            <person name="Ahmed A."/>
            <person name="Albermann K."/>
            <person name="Allen E."/>
            <person name="Ansorge W."/>
            <person name="Araujo R."/>
            <person name="Aparicio A."/>
            <person name="Barrell B.G."/>
            <person name="Badcock K."/>
            <person name="Benes V."/>
            <person name="Botstein D."/>
            <person name="Bowman S."/>
            <person name="Brueckner M."/>
            <person name="Carpenter J."/>
            <person name="Cherry J.M."/>
            <person name="Chung E."/>
            <person name="Churcher C.M."/>
            <person name="Coster F."/>
            <person name="Davis K."/>
            <person name="Davis R.W."/>
            <person name="Dietrich F.S."/>
            <person name="Delius H."/>
            <person name="DiPaolo T."/>
            <person name="Dubois E."/>
            <person name="Duesterhoeft A."/>
            <person name="Duncan M."/>
            <person name="Floeth M."/>
            <person name="Fortin N."/>
            <person name="Friesen J.D."/>
            <person name="Fritz C."/>
            <person name="Goffeau A."/>
            <person name="Hall J."/>
            <person name="Hebling U."/>
            <person name="Heumann K."/>
            <person name="Hilbert H."/>
            <person name="Hillier L.W."/>
            <person name="Hunicke-Smith S."/>
            <person name="Hyman R.W."/>
            <person name="Johnston M."/>
            <person name="Kalman S."/>
            <person name="Kleine K."/>
            <person name="Komp C."/>
            <person name="Kurdi O."/>
            <person name="Lashkari D."/>
            <person name="Lew H."/>
            <person name="Lin A."/>
            <person name="Lin D."/>
            <person name="Louis E.J."/>
            <person name="Marathe R."/>
            <person name="Messenguy F."/>
            <person name="Mewes H.-W."/>
            <person name="Mirtipati S."/>
            <person name="Moestl D."/>
            <person name="Mueller-Auer S."/>
            <person name="Namath A."/>
            <person name="Nentwich U."/>
            <person name="Oefner P."/>
            <person name="Pearson D."/>
            <person name="Petel F.X."/>
            <person name="Pohl T.M."/>
            <person name="Purnelle B."/>
            <person name="Rajandream M.A."/>
            <person name="Rechmann S."/>
            <person name="Rieger M."/>
            <person name="Riles L."/>
            <person name="Roberts D."/>
            <person name="Schaefer M."/>
            <person name="Scharfe M."/>
            <person name="Scherens B."/>
            <person name="Schramm S."/>
            <person name="Schroeder M."/>
            <person name="Sdicu A.-M."/>
            <person name="Tettelin H."/>
            <person name="Urrestarazu L.A."/>
            <person name="Ushinsky S."/>
            <person name="Vierendeels F."/>
            <person name="Vissers S."/>
            <person name="Voss H."/>
            <person name="Walsh S.V."/>
            <person name="Wambutt R."/>
            <person name="Wang Y."/>
            <person name="Wedler E."/>
            <person name="Wedler H."/>
            <person name="Winnett E."/>
            <person name="Zhong W.-W."/>
            <person name="Zollner A."/>
            <person name="Vo D.H."/>
            <person name="Hani J."/>
        </authorList>
    </citation>
    <scope>NUCLEOTIDE SEQUENCE [LARGE SCALE GENOMIC DNA]</scope>
    <source>
        <strain>ATCC 204508 / S288c</strain>
    </source>
</reference>
<reference key="2">
    <citation type="journal article" date="2014" name="G3 (Bethesda)">
        <title>The reference genome sequence of Saccharomyces cerevisiae: Then and now.</title>
        <authorList>
            <person name="Engel S.R."/>
            <person name="Dietrich F.S."/>
            <person name="Fisk D.G."/>
            <person name="Binkley G."/>
            <person name="Balakrishnan R."/>
            <person name="Costanzo M.C."/>
            <person name="Dwight S.S."/>
            <person name="Hitz B.C."/>
            <person name="Karra K."/>
            <person name="Nash R.S."/>
            <person name="Weng S."/>
            <person name="Wong E.D."/>
            <person name="Lloyd P."/>
            <person name="Skrzypek M.S."/>
            <person name="Miyasato S.R."/>
            <person name="Simison M."/>
            <person name="Cherry J.M."/>
        </authorList>
    </citation>
    <scope>GENOME REANNOTATION</scope>
    <source>
        <strain>ATCC 204508 / S288c</strain>
    </source>
</reference>
<reference key="3">
    <citation type="journal article" date="1998" name="Genome Res.">
        <title>Transposable elements and genome organization: a comprehensive survey of retrotransposons revealed by the complete Saccharomyces cerevisiae genome sequence.</title>
        <authorList>
            <person name="Kim J.M."/>
            <person name="Vanguri S."/>
            <person name="Boeke J.D."/>
            <person name="Gabriel A."/>
            <person name="Voytas D.F."/>
        </authorList>
    </citation>
    <scope>NOMENCLATURE</scope>
</reference>
<reference key="4">
    <citation type="journal article" date="2002" name="Mol. Cell. Biol.">
        <title>Differential effects of chromatin and Gcn4 on the 50-fold range of expression among individual yeast Ty1 retrotransposons.</title>
        <authorList>
            <person name="Morillon A."/>
            <person name="Benard L."/>
            <person name="Springer M."/>
            <person name="Lesage P."/>
        </authorList>
    </citation>
    <scope>INDUCTION</scope>
</reference>
<reference key="5">
    <citation type="journal article" date="2005" name="Cytogenet. Genome Res.">
        <title>Happy together: the life and times of Ty retrotransposons and their hosts.</title>
        <authorList>
            <person name="Lesage P."/>
            <person name="Todeschini A.L."/>
        </authorList>
    </citation>
    <scope>REVIEW</scope>
</reference>